<sequence length="369" mass="39699">MAKDEKKAALEAALKKIEKNFGKGAVMRMGEKVDTQISTVPSGSLALDAALGVGGYPRGRIVEIYGPESSGKTTVALHAVAEVQKRGGTAAYIDAENAMDPAYAEALGVDIDQLILSQPNTGEEGLQIADTLISSGAIDIVVVDSVAALVPRAEIEGEMGDSHVGLQARLMSQALRKLSGTIAKTKTIAIFINQIREKVGVMFGNPETTPGGRALKFYSTIRLEVRRAEQIKQSTNVIGNRVKIKVVKNKVAPPFKVAEVDIMYGQGISQSGELLDMAADQDIVDKAGAWYSYHGEKIGQGRENAKKYLEEHPDVSEDIQTQVRKAYGIDAESLEEKEDPEKVKEQRAKKAAPGEEKPAEPASPEKTDK</sequence>
<proteinExistence type="inferred from homology"/>
<comment type="function">
    <text evidence="1">Can catalyze the hydrolysis of ATP in the presence of single-stranded DNA, the ATP-dependent uptake of single-stranded DNA by duplex DNA, and the ATP-dependent hybridization of homologous single-stranded DNAs. It interacts with LexA causing its activation and leading to its autocatalytic cleavage.</text>
</comment>
<comment type="subcellular location">
    <subcellularLocation>
        <location evidence="1">Cytoplasm</location>
    </subcellularLocation>
</comment>
<comment type="similarity">
    <text evidence="1">Belongs to the RecA family.</text>
</comment>
<organism>
    <name type="scientific">Lactobacillus delbrueckii subsp. bulgaricus (strain ATCC BAA-365 / Lb-18)</name>
    <dbReference type="NCBI Taxonomy" id="321956"/>
    <lineage>
        <taxon>Bacteria</taxon>
        <taxon>Bacillati</taxon>
        <taxon>Bacillota</taxon>
        <taxon>Bacilli</taxon>
        <taxon>Lactobacillales</taxon>
        <taxon>Lactobacillaceae</taxon>
        <taxon>Lactobacillus</taxon>
    </lineage>
</organism>
<name>RECA_LACDB</name>
<evidence type="ECO:0000255" key="1">
    <source>
        <dbReference type="HAMAP-Rule" id="MF_00268"/>
    </source>
</evidence>
<evidence type="ECO:0000256" key="2">
    <source>
        <dbReference type="SAM" id="MobiDB-lite"/>
    </source>
</evidence>
<keyword id="KW-0067">ATP-binding</keyword>
<keyword id="KW-0963">Cytoplasm</keyword>
<keyword id="KW-0227">DNA damage</keyword>
<keyword id="KW-0233">DNA recombination</keyword>
<keyword id="KW-0234">DNA repair</keyword>
<keyword id="KW-0238">DNA-binding</keyword>
<keyword id="KW-0547">Nucleotide-binding</keyword>
<keyword id="KW-0742">SOS response</keyword>
<protein>
    <recommendedName>
        <fullName evidence="1">Protein RecA</fullName>
    </recommendedName>
    <alternativeName>
        <fullName evidence="1">Recombinase A</fullName>
    </alternativeName>
</protein>
<accession>Q04BJ8</accession>
<dbReference type="EMBL" id="CP000412">
    <property type="protein sequence ID" value="ABJ58174.1"/>
    <property type="molecule type" value="Genomic_DNA"/>
</dbReference>
<dbReference type="RefSeq" id="WP_011678076.1">
    <property type="nucleotide sequence ID" value="NC_008529.1"/>
</dbReference>
<dbReference type="SMR" id="Q04BJ8"/>
<dbReference type="KEGG" id="lbu:LBUL_0535"/>
<dbReference type="HOGENOM" id="CLU_040469_3_2_9"/>
<dbReference type="BioCyc" id="LDEL321956:LBUL_RS02545-MONOMER"/>
<dbReference type="GO" id="GO:0005829">
    <property type="term" value="C:cytosol"/>
    <property type="evidence" value="ECO:0007669"/>
    <property type="project" value="TreeGrafter"/>
</dbReference>
<dbReference type="GO" id="GO:0005524">
    <property type="term" value="F:ATP binding"/>
    <property type="evidence" value="ECO:0007669"/>
    <property type="project" value="UniProtKB-UniRule"/>
</dbReference>
<dbReference type="GO" id="GO:0016887">
    <property type="term" value="F:ATP hydrolysis activity"/>
    <property type="evidence" value="ECO:0007669"/>
    <property type="project" value="InterPro"/>
</dbReference>
<dbReference type="GO" id="GO:0140664">
    <property type="term" value="F:ATP-dependent DNA damage sensor activity"/>
    <property type="evidence" value="ECO:0007669"/>
    <property type="project" value="InterPro"/>
</dbReference>
<dbReference type="GO" id="GO:0003684">
    <property type="term" value="F:damaged DNA binding"/>
    <property type="evidence" value="ECO:0007669"/>
    <property type="project" value="UniProtKB-UniRule"/>
</dbReference>
<dbReference type="GO" id="GO:0003697">
    <property type="term" value="F:single-stranded DNA binding"/>
    <property type="evidence" value="ECO:0007669"/>
    <property type="project" value="UniProtKB-UniRule"/>
</dbReference>
<dbReference type="GO" id="GO:0006310">
    <property type="term" value="P:DNA recombination"/>
    <property type="evidence" value="ECO:0007669"/>
    <property type="project" value="UniProtKB-UniRule"/>
</dbReference>
<dbReference type="GO" id="GO:0006281">
    <property type="term" value="P:DNA repair"/>
    <property type="evidence" value="ECO:0007669"/>
    <property type="project" value="UniProtKB-UniRule"/>
</dbReference>
<dbReference type="GO" id="GO:0009432">
    <property type="term" value="P:SOS response"/>
    <property type="evidence" value="ECO:0007669"/>
    <property type="project" value="UniProtKB-UniRule"/>
</dbReference>
<dbReference type="CDD" id="cd00983">
    <property type="entry name" value="RecA"/>
    <property type="match status" value="1"/>
</dbReference>
<dbReference type="FunFam" id="3.40.50.300:FF:000087">
    <property type="entry name" value="Recombinase RecA"/>
    <property type="match status" value="1"/>
</dbReference>
<dbReference type="Gene3D" id="3.40.50.300">
    <property type="entry name" value="P-loop containing nucleotide triphosphate hydrolases"/>
    <property type="match status" value="1"/>
</dbReference>
<dbReference type="HAMAP" id="MF_00268">
    <property type="entry name" value="RecA"/>
    <property type="match status" value="1"/>
</dbReference>
<dbReference type="InterPro" id="IPR003593">
    <property type="entry name" value="AAA+_ATPase"/>
</dbReference>
<dbReference type="InterPro" id="IPR013765">
    <property type="entry name" value="DNA_recomb/repair_RecA"/>
</dbReference>
<dbReference type="InterPro" id="IPR020584">
    <property type="entry name" value="DNA_recomb/repair_RecA_CS"/>
</dbReference>
<dbReference type="InterPro" id="IPR027417">
    <property type="entry name" value="P-loop_NTPase"/>
</dbReference>
<dbReference type="InterPro" id="IPR049261">
    <property type="entry name" value="RecA-like_C"/>
</dbReference>
<dbReference type="InterPro" id="IPR049428">
    <property type="entry name" value="RecA-like_N"/>
</dbReference>
<dbReference type="InterPro" id="IPR020588">
    <property type="entry name" value="RecA_ATP-bd"/>
</dbReference>
<dbReference type="InterPro" id="IPR023400">
    <property type="entry name" value="RecA_C_sf"/>
</dbReference>
<dbReference type="InterPro" id="IPR020587">
    <property type="entry name" value="RecA_monomer-monomer_interface"/>
</dbReference>
<dbReference type="NCBIfam" id="TIGR02012">
    <property type="entry name" value="tigrfam_recA"/>
    <property type="match status" value="1"/>
</dbReference>
<dbReference type="PANTHER" id="PTHR45900:SF1">
    <property type="entry name" value="MITOCHONDRIAL DNA REPAIR PROTEIN RECA HOMOLOG-RELATED"/>
    <property type="match status" value="1"/>
</dbReference>
<dbReference type="PANTHER" id="PTHR45900">
    <property type="entry name" value="RECA"/>
    <property type="match status" value="1"/>
</dbReference>
<dbReference type="Pfam" id="PF00154">
    <property type="entry name" value="RecA"/>
    <property type="match status" value="1"/>
</dbReference>
<dbReference type="Pfam" id="PF21096">
    <property type="entry name" value="RecA_C"/>
    <property type="match status" value="1"/>
</dbReference>
<dbReference type="PRINTS" id="PR00142">
    <property type="entry name" value="RECA"/>
</dbReference>
<dbReference type="SMART" id="SM00382">
    <property type="entry name" value="AAA"/>
    <property type="match status" value="1"/>
</dbReference>
<dbReference type="SUPFAM" id="SSF52540">
    <property type="entry name" value="P-loop containing nucleoside triphosphate hydrolases"/>
    <property type="match status" value="1"/>
</dbReference>
<dbReference type="SUPFAM" id="SSF54752">
    <property type="entry name" value="RecA protein, C-terminal domain"/>
    <property type="match status" value="1"/>
</dbReference>
<dbReference type="PROSITE" id="PS00321">
    <property type="entry name" value="RECA_1"/>
    <property type="match status" value="1"/>
</dbReference>
<dbReference type="PROSITE" id="PS50162">
    <property type="entry name" value="RECA_2"/>
    <property type="match status" value="1"/>
</dbReference>
<dbReference type="PROSITE" id="PS50163">
    <property type="entry name" value="RECA_3"/>
    <property type="match status" value="1"/>
</dbReference>
<gene>
    <name evidence="1" type="primary">recA</name>
    <name type="ordered locus">LBUL_0535</name>
</gene>
<reference key="1">
    <citation type="journal article" date="2006" name="Proc. Natl. Acad. Sci. U.S.A.">
        <title>Comparative genomics of the lactic acid bacteria.</title>
        <authorList>
            <person name="Makarova K.S."/>
            <person name="Slesarev A."/>
            <person name="Wolf Y.I."/>
            <person name="Sorokin A."/>
            <person name="Mirkin B."/>
            <person name="Koonin E.V."/>
            <person name="Pavlov A."/>
            <person name="Pavlova N."/>
            <person name="Karamychev V."/>
            <person name="Polouchine N."/>
            <person name="Shakhova V."/>
            <person name="Grigoriev I."/>
            <person name="Lou Y."/>
            <person name="Rohksar D."/>
            <person name="Lucas S."/>
            <person name="Huang K."/>
            <person name="Goodstein D.M."/>
            <person name="Hawkins T."/>
            <person name="Plengvidhya V."/>
            <person name="Welker D."/>
            <person name="Hughes J."/>
            <person name="Goh Y."/>
            <person name="Benson A."/>
            <person name="Baldwin K."/>
            <person name="Lee J.-H."/>
            <person name="Diaz-Muniz I."/>
            <person name="Dosti B."/>
            <person name="Smeianov V."/>
            <person name="Wechter W."/>
            <person name="Barabote R."/>
            <person name="Lorca G."/>
            <person name="Altermann E."/>
            <person name="Barrangou R."/>
            <person name="Ganesan B."/>
            <person name="Xie Y."/>
            <person name="Rawsthorne H."/>
            <person name="Tamir D."/>
            <person name="Parker C."/>
            <person name="Breidt F."/>
            <person name="Broadbent J.R."/>
            <person name="Hutkins R."/>
            <person name="O'Sullivan D."/>
            <person name="Steele J."/>
            <person name="Unlu G."/>
            <person name="Saier M.H. Jr."/>
            <person name="Klaenhammer T."/>
            <person name="Richardson P."/>
            <person name="Kozyavkin S."/>
            <person name="Weimer B.C."/>
            <person name="Mills D.A."/>
        </authorList>
    </citation>
    <scope>NUCLEOTIDE SEQUENCE [LARGE SCALE GENOMIC DNA]</scope>
    <source>
        <strain>ATCC BAA-365 / Lb-18</strain>
    </source>
</reference>
<feature type="chain" id="PRO_1000047938" description="Protein RecA">
    <location>
        <begin position="1"/>
        <end position="369"/>
    </location>
</feature>
<feature type="region of interest" description="Disordered" evidence="2">
    <location>
        <begin position="328"/>
        <end position="369"/>
    </location>
</feature>
<feature type="compositionally biased region" description="Basic and acidic residues" evidence="2">
    <location>
        <begin position="339"/>
        <end position="369"/>
    </location>
</feature>
<feature type="binding site" evidence="1">
    <location>
        <begin position="66"/>
        <end position="73"/>
    </location>
    <ligand>
        <name>ATP</name>
        <dbReference type="ChEBI" id="CHEBI:30616"/>
    </ligand>
</feature>